<organism>
    <name type="scientific">Halobacterium salinarum (strain ATCC 700922 / JCM 11081 / NRC-1)</name>
    <name type="common">Halobacterium halobium</name>
    <dbReference type="NCBI Taxonomy" id="64091"/>
    <lineage>
        <taxon>Archaea</taxon>
        <taxon>Methanobacteriati</taxon>
        <taxon>Methanobacteriota</taxon>
        <taxon>Stenosarchaea group</taxon>
        <taxon>Halobacteria</taxon>
        <taxon>Halobacteriales</taxon>
        <taxon>Halobacteriaceae</taxon>
        <taxon>Halobacterium</taxon>
        <taxon>Halobacterium salinarum NRC-34001</taxon>
    </lineage>
</organism>
<reference key="1">
    <citation type="journal article" date="2000" name="Proc. Natl. Acad. Sci. U.S.A.">
        <title>Genome sequence of Halobacterium species NRC-1.</title>
        <authorList>
            <person name="Ng W.V."/>
            <person name="Kennedy S.P."/>
            <person name="Mahairas G.G."/>
            <person name="Berquist B."/>
            <person name="Pan M."/>
            <person name="Shukla H.D."/>
            <person name="Lasky S.R."/>
            <person name="Baliga N.S."/>
            <person name="Thorsson V."/>
            <person name="Sbrogna J."/>
            <person name="Swartzell S."/>
            <person name="Weir D."/>
            <person name="Hall J."/>
            <person name="Dahl T.A."/>
            <person name="Welti R."/>
            <person name="Goo Y.A."/>
            <person name="Leithauser B."/>
            <person name="Keller K."/>
            <person name="Cruz R."/>
            <person name="Danson M.J."/>
            <person name="Hough D.W."/>
            <person name="Maddocks D.G."/>
            <person name="Jablonski P.E."/>
            <person name="Krebs M.P."/>
            <person name="Angevine C.M."/>
            <person name="Dale H."/>
            <person name="Isenbarger T.A."/>
            <person name="Peck R.F."/>
            <person name="Pohlschroder M."/>
            <person name="Spudich J.L."/>
            <person name="Jung K.-H."/>
            <person name="Alam M."/>
            <person name="Freitas T."/>
            <person name="Hou S."/>
            <person name="Daniels C.J."/>
            <person name="Dennis P.P."/>
            <person name="Omer A.D."/>
            <person name="Ebhardt H."/>
            <person name="Lowe T.M."/>
            <person name="Liang P."/>
            <person name="Riley M."/>
            <person name="Hood L."/>
            <person name="DasSarma S."/>
        </authorList>
    </citation>
    <scope>NUCLEOTIDE SEQUENCE [LARGE SCALE GENOMIC DNA]</scope>
    <source>
        <strain>ATCC 700922 / JCM 11081 / NRC-1</strain>
    </source>
</reference>
<evidence type="ECO:0000255" key="1">
    <source>
        <dbReference type="HAMAP-Rule" id="MF_00156"/>
    </source>
</evidence>
<sequence length="274" mass="28571">MPTVNSVRRAGNTDEETDPVTMLTAYDAPTASVVDDAGVDMILVGDSVGNAKLGYDTTLPVSVDEIASATGAVARATADAVVVADMPFLSFGADETESVRNAGRMLKEEDADAVKLESGPHTVSLTETLTSLGIPVMAHLGLTPQHVNQLGGYFRQGTDQDSAERMLDLARDHEAAGAFALVLEHVPANVAADITDAIDIPTIGIGAGPDTDGQVLVISDVIGMSERSPPFSKQFGDVNREMAAAVDDYVDAVESGSFPAAEHSHVADDVDDVY</sequence>
<comment type="function">
    <text evidence="1">Catalyzes the reversible reaction in which hydroxymethyl group from 5,10-methylenetetrahydrofolate is transferred onto alpha-ketoisovalerate to form ketopantoate.</text>
</comment>
<comment type="catalytic activity">
    <reaction evidence="1">
        <text>3-methyl-2-oxobutanoate + (6R)-5,10-methylene-5,6,7,8-tetrahydrofolate + H2O = 2-dehydropantoate + (6S)-5,6,7,8-tetrahydrofolate</text>
        <dbReference type="Rhea" id="RHEA:11824"/>
        <dbReference type="ChEBI" id="CHEBI:11561"/>
        <dbReference type="ChEBI" id="CHEBI:11851"/>
        <dbReference type="ChEBI" id="CHEBI:15377"/>
        <dbReference type="ChEBI" id="CHEBI:15636"/>
        <dbReference type="ChEBI" id="CHEBI:57453"/>
        <dbReference type="EC" id="2.1.2.11"/>
    </reaction>
</comment>
<comment type="cofactor">
    <cofactor evidence="1">
        <name>Mg(2+)</name>
        <dbReference type="ChEBI" id="CHEBI:18420"/>
    </cofactor>
    <text evidence="1">Binds 1 Mg(2+) ion per subunit.</text>
</comment>
<comment type="pathway">
    <text evidence="1">Cofactor biosynthesis; coenzyme A biosynthesis.</text>
</comment>
<comment type="subunit">
    <text evidence="1">Homodecamer; pentamer of dimers.</text>
</comment>
<comment type="subcellular location">
    <subcellularLocation>
        <location evidence="1">Cytoplasm</location>
    </subcellularLocation>
</comment>
<comment type="similarity">
    <text evidence="1">Belongs to the PanB family.</text>
</comment>
<protein>
    <recommendedName>
        <fullName evidence="1">3-methyl-2-oxobutanoate hydroxymethyltransferase</fullName>
        <ecNumber evidence="1">2.1.2.11</ecNumber>
    </recommendedName>
    <alternativeName>
        <fullName evidence="1">Ketopantoate hydroxymethyltransferase</fullName>
        <shortName evidence="1">KPHMT</shortName>
    </alternativeName>
</protein>
<gene>
    <name evidence="1" type="primary">panB</name>
    <name type="ordered locus">VNG_1478G</name>
</gene>
<name>PANB_HALSA</name>
<keyword id="KW-0173">Coenzyme A biosynthesis</keyword>
<keyword id="KW-0963">Cytoplasm</keyword>
<keyword id="KW-0460">Magnesium</keyword>
<keyword id="KW-0479">Metal-binding</keyword>
<keyword id="KW-1185">Reference proteome</keyword>
<keyword id="KW-0808">Transferase</keyword>
<feature type="chain" id="PRO_0000184916" description="3-methyl-2-oxobutanoate hydroxymethyltransferase">
    <location>
        <begin position="1"/>
        <end position="274"/>
    </location>
</feature>
<feature type="active site" description="Proton acceptor" evidence="1">
    <location>
        <position position="184"/>
    </location>
</feature>
<feature type="binding site" evidence="1">
    <location>
        <begin position="46"/>
        <end position="47"/>
    </location>
    <ligand>
        <name>3-methyl-2-oxobutanoate</name>
        <dbReference type="ChEBI" id="CHEBI:11851"/>
    </ligand>
</feature>
<feature type="binding site" evidence="1">
    <location>
        <position position="46"/>
    </location>
    <ligand>
        <name>Mg(2+)</name>
        <dbReference type="ChEBI" id="CHEBI:18420"/>
    </ligand>
</feature>
<feature type="binding site" evidence="1">
    <location>
        <position position="85"/>
    </location>
    <ligand>
        <name>3-methyl-2-oxobutanoate</name>
        <dbReference type="ChEBI" id="CHEBI:11851"/>
    </ligand>
</feature>
<feature type="binding site" evidence="1">
    <location>
        <position position="85"/>
    </location>
    <ligand>
        <name>Mg(2+)</name>
        <dbReference type="ChEBI" id="CHEBI:18420"/>
    </ligand>
</feature>
<feature type="binding site" evidence="1">
    <location>
        <position position="115"/>
    </location>
    <ligand>
        <name>3-methyl-2-oxobutanoate</name>
        <dbReference type="ChEBI" id="CHEBI:11851"/>
    </ligand>
</feature>
<feature type="binding site" evidence="1">
    <location>
        <position position="117"/>
    </location>
    <ligand>
        <name>Mg(2+)</name>
        <dbReference type="ChEBI" id="CHEBI:18420"/>
    </ligand>
</feature>
<proteinExistence type="inferred from homology"/>
<accession>Q9HPT6</accession>
<dbReference type="EC" id="2.1.2.11" evidence="1"/>
<dbReference type="EMBL" id="AE004437">
    <property type="protein sequence ID" value="AAG19781.1"/>
    <property type="molecule type" value="Genomic_DNA"/>
</dbReference>
<dbReference type="PIR" id="A84302">
    <property type="entry name" value="A84302"/>
</dbReference>
<dbReference type="RefSeq" id="WP_010903078.1">
    <property type="nucleotide sequence ID" value="NC_002607.1"/>
</dbReference>
<dbReference type="SMR" id="Q9HPT6"/>
<dbReference type="STRING" id="64091.VNG_1478G"/>
<dbReference type="PaxDb" id="64091-VNG_1478G"/>
<dbReference type="GeneID" id="68694189"/>
<dbReference type="KEGG" id="hal:VNG_1478G"/>
<dbReference type="PATRIC" id="fig|64091.14.peg.1131"/>
<dbReference type="HOGENOM" id="CLU_036645_1_0_2"/>
<dbReference type="InParanoid" id="Q9HPT6"/>
<dbReference type="OrthoDB" id="8414at2157"/>
<dbReference type="PhylomeDB" id="Q9HPT6"/>
<dbReference type="UniPathway" id="UPA00241"/>
<dbReference type="Proteomes" id="UP000000554">
    <property type="component" value="Chromosome"/>
</dbReference>
<dbReference type="GO" id="GO:0005737">
    <property type="term" value="C:cytoplasm"/>
    <property type="evidence" value="ECO:0007669"/>
    <property type="project" value="UniProtKB-SubCell"/>
</dbReference>
<dbReference type="GO" id="GO:0003864">
    <property type="term" value="F:3-methyl-2-oxobutanoate hydroxymethyltransferase activity"/>
    <property type="evidence" value="ECO:0000318"/>
    <property type="project" value="GO_Central"/>
</dbReference>
<dbReference type="GO" id="GO:0000287">
    <property type="term" value="F:magnesium ion binding"/>
    <property type="evidence" value="ECO:0000318"/>
    <property type="project" value="GO_Central"/>
</dbReference>
<dbReference type="GO" id="GO:0015937">
    <property type="term" value="P:coenzyme A biosynthetic process"/>
    <property type="evidence" value="ECO:0007669"/>
    <property type="project" value="UniProtKB-UniRule"/>
</dbReference>
<dbReference type="GO" id="GO:0015940">
    <property type="term" value="P:pantothenate biosynthetic process"/>
    <property type="evidence" value="ECO:0000318"/>
    <property type="project" value="GO_Central"/>
</dbReference>
<dbReference type="CDD" id="cd06557">
    <property type="entry name" value="KPHMT-like"/>
    <property type="match status" value="1"/>
</dbReference>
<dbReference type="FunFam" id="3.20.20.60:FF:000003">
    <property type="entry name" value="3-methyl-2-oxobutanoate hydroxymethyltransferase"/>
    <property type="match status" value="1"/>
</dbReference>
<dbReference type="Gene3D" id="3.20.20.60">
    <property type="entry name" value="Phosphoenolpyruvate-binding domains"/>
    <property type="match status" value="1"/>
</dbReference>
<dbReference type="HAMAP" id="MF_00156">
    <property type="entry name" value="PanB"/>
    <property type="match status" value="1"/>
</dbReference>
<dbReference type="InterPro" id="IPR003700">
    <property type="entry name" value="Pantoate_hydroxy_MeTrfase"/>
</dbReference>
<dbReference type="InterPro" id="IPR015813">
    <property type="entry name" value="Pyrv/PenolPyrv_kinase-like_dom"/>
</dbReference>
<dbReference type="InterPro" id="IPR040442">
    <property type="entry name" value="Pyrv_kinase-like_dom_sf"/>
</dbReference>
<dbReference type="NCBIfam" id="TIGR00222">
    <property type="entry name" value="panB"/>
    <property type="match status" value="1"/>
</dbReference>
<dbReference type="NCBIfam" id="NF001452">
    <property type="entry name" value="PRK00311.1"/>
    <property type="match status" value="1"/>
</dbReference>
<dbReference type="PANTHER" id="PTHR20881">
    <property type="entry name" value="3-METHYL-2-OXOBUTANOATE HYDROXYMETHYLTRANSFERASE"/>
    <property type="match status" value="1"/>
</dbReference>
<dbReference type="PANTHER" id="PTHR20881:SF0">
    <property type="entry name" value="3-METHYL-2-OXOBUTANOATE HYDROXYMETHYLTRANSFERASE"/>
    <property type="match status" value="1"/>
</dbReference>
<dbReference type="Pfam" id="PF02548">
    <property type="entry name" value="Pantoate_transf"/>
    <property type="match status" value="1"/>
</dbReference>
<dbReference type="PIRSF" id="PIRSF000388">
    <property type="entry name" value="Pantoate_hydroxy_MeTrfase"/>
    <property type="match status" value="1"/>
</dbReference>
<dbReference type="SUPFAM" id="SSF51621">
    <property type="entry name" value="Phosphoenolpyruvate/pyruvate domain"/>
    <property type="match status" value="1"/>
</dbReference>